<feature type="chain" id="PRO_0000182277" description="Transcriptional repressor NrdR">
    <location>
        <begin position="1"/>
        <end position="159"/>
    </location>
</feature>
<feature type="domain" description="ATP-cone" evidence="1">
    <location>
        <begin position="49"/>
        <end position="139"/>
    </location>
</feature>
<feature type="zinc finger region" evidence="1">
    <location>
        <begin position="3"/>
        <end position="34"/>
    </location>
</feature>
<sequence>MRCPFCRHDDTQVVDSRVSEDGAAIRRRRRCSACDKRFTTYERVELALPAVVKKDGSRTEFDRRKIVASMQLALRKRPVAADAIDAAVARIEYQLLASGEREVRSEKLGELVMNELRQLDTIAYVRFASVYRRFEDVSEFEDVIEEFRRAAPAKTPRKR</sequence>
<keyword id="KW-0067">ATP-binding</keyword>
<keyword id="KW-0238">DNA-binding</keyword>
<keyword id="KW-0479">Metal-binding</keyword>
<keyword id="KW-0547">Nucleotide-binding</keyword>
<keyword id="KW-1185">Reference proteome</keyword>
<keyword id="KW-0678">Repressor</keyword>
<keyword id="KW-0804">Transcription</keyword>
<keyword id="KW-0805">Transcription regulation</keyword>
<keyword id="KW-0862">Zinc</keyword>
<keyword id="KW-0863">Zinc-finger</keyword>
<dbReference type="EMBL" id="CP000010">
    <property type="protein sequence ID" value="AAU49634.1"/>
    <property type="molecule type" value="Genomic_DNA"/>
</dbReference>
<dbReference type="RefSeq" id="WP_004185666.1">
    <property type="nucleotide sequence ID" value="NC_006348.1"/>
</dbReference>
<dbReference type="RefSeq" id="YP_103653.1">
    <property type="nucleotide sequence ID" value="NC_006348.1"/>
</dbReference>
<dbReference type="SMR" id="Q62I17"/>
<dbReference type="GeneID" id="93061344"/>
<dbReference type="KEGG" id="bma:BMA2074"/>
<dbReference type="PATRIC" id="fig|243160.12.peg.2145"/>
<dbReference type="eggNOG" id="COG1327">
    <property type="taxonomic scope" value="Bacteria"/>
</dbReference>
<dbReference type="HOGENOM" id="CLU_108412_0_0_4"/>
<dbReference type="Proteomes" id="UP000006693">
    <property type="component" value="Chromosome 1"/>
</dbReference>
<dbReference type="GO" id="GO:0005524">
    <property type="term" value="F:ATP binding"/>
    <property type="evidence" value="ECO:0007669"/>
    <property type="project" value="UniProtKB-KW"/>
</dbReference>
<dbReference type="GO" id="GO:0003677">
    <property type="term" value="F:DNA binding"/>
    <property type="evidence" value="ECO:0007669"/>
    <property type="project" value="UniProtKB-KW"/>
</dbReference>
<dbReference type="GO" id="GO:0008270">
    <property type="term" value="F:zinc ion binding"/>
    <property type="evidence" value="ECO:0007669"/>
    <property type="project" value="UniProtKB-UniRule"/>
</dbReference>
<dbReference type="GO" id="GO:0045892">
    <property type="term" value="P:negative regulation of DNA-templated transcription"/>
    <property type="evidence" value="ECO:0007669"/>
    <property type="project" value="UniProtKB-UniRule"/>
</dbReference>
<dbReference type="HAMAP" id="MF_00440">
    <property type="entry name" value="NrdR"/>
    <property type="match status" value="1"/>
</dbReference>
<dbReference type="InterPro" id="IPR005144">
    <property type="entry name" value="ATP-cone_dom"/>
</dbReference>
<dbReference type="InterPro" id="IPR055173">
    <property type="entry name" value="NrdR-like_N"/>
</dbReference>
<dbReference type="InterPro" id="IPR003796">
    <property type="entry name" value="RNR_NrdR-like"/>
</dbReference>
<dbReference type="NCBIfam" id="TIGR00244">
    <property type="entry name" value="transcriptional regulator NrdR"/>
    <property type="match status" value="1"/>
</dbReference>
<dbReference type="PANTHER" id="PTHR30455">
    <property type="entry name" value="TRANSCRIPTIONAL REPRESSOR NRDR"/>
    <property type="match status" value="1"/>
</dbReference>
<dbReference type="PANTHER" id="PTHR30455:SF2">
    <property type="entry name" value="TRANSCRIPTIONAL REPRESSOR NRDR"/>
    <property type="match status" value="1"/>
</dbReference>
<dbReference type="Pfam" id="PF03477">
    <property type="entry name" value="ATP-cone"/>
    <property type="match status" value="1"/>
</dbReference>
<dbReference type="Pfam" id="PF22811">
    <property type="entry name" value="Zn_ribbon_NrdR"/>
    <property type="match status" value="1"/>
</dbReference>
<dbReference type="PROSITE" id="PS51161">
    <property type="entry name" value="ATP_CONE"/>
    <property type="match status" value="1"/>
</dbReference>
<protein>
    <recommendedName>
        <fullName evidence="1">Transcriptional repressor NrdR</fullName>
    </recommendedName>
</protein>
<evidence type="ECO:0000255" key="1">
    <source>
        <dbReference type="HAMAP-Rule" id="MF_00440"/>
    </source>
</evidence>
<proteinExistence type="inferred from homology"/>
<gene>
    <name evidence="1" type="primary">nrdR</name>
    <name type="ordered locus">BMA2074</name>
</gene>
<accession>Q62I17</accession>
<name>NRDR_BURMA</name>
<reference key="1">
    <citation type="journal article" date="2004" name="Proc. Natl. Acad. Sci. U.S.A.">
        <title>Structural flexibility in the Burkholderia mallei genome.</title>
        <authorList>
            <person name="Nierman W.C."/>
            <person name="DeShazer D."/>
            <person name="Kim H.S."/>
            <person name="Tettelin H."/>
            <person name="Nelson K.E."/>
            <person name="Feldblyum T.V."/>
            <person name="Ulrich R.L."/>
            <person name="Ronning C.M."/>
            <person name="Brinkac L.M."/>
            <person name="Daugherty S.C."/>
            <person name="Davidsen T.D."/>
            <person name="DeBoy R.T."/>
            <person name="Dimitrov G."/>
            <person name="Dodson R.J."/>
            <person name="Durkin A.S."/>
            <person name="Gwinn M.L."/>
            <person name="Haft D.H."/>
            <person name="Khouri H.M."/>
            <person name="Kolonay J.F."/>
            <person name="Madupu R."/>
            <person name="Mohammoud Y."/>
            <person name="Nelson W.C."/>
            <person name="Radune D."/>
            <person name="Romero C.M."/>
            <person name="Sarria S."/>
            <person name="Selengut J."/>
            <person name="Shamblin C."/>
            <person name="Sullivan S.A."/>
            <person name="White O."/>
            <person name="Yu Y."/>
            <person name="Zafar N."/>
            <person name="Zhou L."/>
            <person name="Fraser C.M."/>
        </authorList>
    </citation>
    <scope>NUCLEOTIDE SEQUENCE [LARGE SCALE GENOMIC DNA]</scope>
    <source>
        <strain>ATCC 23344</strain>
    </source>
</reference>
<comment type="function">
    <text evidence="1">Negatively regulates transcription of bacterial ribonucleotide reductase nrd genes and operons by binding to NrdR-boxes.</text>
</comment>
<comment type="cofactor">
    <cofactor evidence="1">
        <name>Zn(2+)</name>
        <dbReference type="ChEBI" id="CHEBI:29105"/>
    </cofactor>
    <text evidence="1">Binds 1 zinc ion.</text>
</comment>
<comment type="similarity">
    <text evidence="1">Belongs to the NrdR family.</text>
</comment>
<organism>
    <name type="scientific">Burkholderia mallei (strain ATCC 23344)</name>
    <dbReference type="NCBI Taxonomy" id="243160"/>
    <lineage>
        <taxon>Bacteria</taxon>
        <taxon>Pseudomonadati</taxon>
        <taxon>Pseudomonadota</taxon>
        <taxon>Betaproteobacteria</taxon>
        <taxon>Burkholderiales</taxon>
        <taxon>Burkholderiaceae</taxon>
        <taxon>Burkholderia</taxon>
        <taxon>pseudomallei group</taxon>
    </lineage>
</organism>